<proteinExistence type="evidence at protein level"/>
<evidence type="ECO:0000269" key="1">
    <source>
    </source>
</evidence>
<evidence type="ECO:0000269" key="2">
    <source>
    </source>
</evidence>
<evidence type="ECO:0000269" key="3">
    <source ref="3"/>
</evidence>
<evidence type="ECO:0000305" key="4"/>
<evidence type="ECO:0000312" key="5">
    <source>
        <dbReference type="PDB" id="1NP1"/>
    </source>
</evidence>
<evidence type="ECO:0000312" key="6">
    <source>
        <dbReference type="PDB" id="2NP1"/>
    </source>
</evidence>
<evidence type="ECO:0000312" key="7">
    <source>
        <dbReference type="PDB" id="3NP1"/>
    </source>
</evidence>
<evidence type="ECO:0000312" key="8">
    <source>
        <dbReference type="PDB" id="4NP1"/>
    </source>
</evidence>
<evidence type="ECO:0007829" key="9">
    <source>
        <dbReference type="PDB" id="1U17"/>
    </source>
</evidence>
<evidence type="ECO:0007829" key="10">
    <source>
        <dbReference type="PDB" id="3NP1"/>
    </source>
</evidence>
<feature type="signal peptide" evidence="1">
    <location>
        <begin position="1"/>
        <end position="23"/>
    </location>
</feature>
<feature type="chain" id="PRO_0000021823" description="Nitrophorin-1">
    <location>
        <begin position="24"/>
        <end position="207"/>
    </location>
</feature>
<feature type="binding site" description="proximal binding residue">
    <location>
        <position position="82"/>
    </location>
    <ligand>
        <name>heme</name>
        <dbReference type="ChEBI" id="CHEBI:30413"/>
    </ligand>
    <ligandPart>
        <name>Fe</name>
        <dbReference type="ChEBI" id="CHEBI:18248"/>
    </ligandPart>
</feature>
<feature type="disulfide bond" evidence="2 3">
    <location>
        <begin position="25"/>
        <end position="145"/>
    </location>
</feature>
<feature type="disulfide bond" evidence="2 3">
    <location>
        <begin position="64"/>
        <end position="194"/>
    </location>
</feature>
<feature type="helix" evidence="9">
    <location>
        <begin position="37"/>
        <end position="40"/>
    </location>
</feature>
<feature type="strand" evidence="9">
    <location>
        <begin position="45"/>
        <end position="55"/>
    </location>
</feature>
<feature type="strand" evidence="9">
    <location>
        <begin position="64"/>
        <end position="72"/>
    </location>
</feature>
<feature type="strand" evidence="9">
    <location>
        <begin position="75"/>
        <end position="83"/>
    </location>
</feature>
<feature type="turn" evidence="9">
    <location>
        <begin position="85"/>
        <end position="87"/>
    </location>
</feature>
<feature type="strand" evidence="9">
    <location>
        <begin position="90"/>
        <end position="101"/>
    </location>
</feature>
<feature type="strand" evidence="9">
    <location>
        <begin position="104"/>
        <end position="112"/>
    </location>
</feature>
<feature type="strand" evidence="9">
    <location>
        <begin position="118"/>
        <end position="120"/>
    </location>
</feature>
<feature type="strand" evidence="9">
    <location>
        <begin position="127"/>
        <end position="135"/>
    </location>
</feature>
<feature type="strand" evidence="9">
    <location>
        <begin position="137"/>
        <end position="163"/>
    </location>
</feature>
<feature type="helix" evidence="9">
    <location>
        <begin position="170"/>
        <end position="178"/>
    </location>
</feature>
<feature type="helix" evidence="9">
    <location>
        <begin position="183"/>
        <end position="185"/>
    </location>
</feature>
<feature type="strand" evidence="9">
    <location>
        <begin position="186"/>
        <end position="188"/>
    </location>
</feature>
<feature type="helix" evidence="10">
    <location>
        <begin position="189"/>
        <end position="191"/>
    </location>
</feature>
<feature type="helix" evidence="9">
    <location>
        <begin position="198"/>
        <end position="204"/>
    </location>
</feature>
<keyword id="KW-0002">3D-structure</keyword>
<keyword id="KW-0903">Direct protein sequencing</keyword>
<keyword id="KW-1015">Disulfide bond</keyword>
<keyword id="KW-0349">Heme</keyword>
<keyword id="KW-0408">Iron</keyword>
<keyword id="KW-0479">Metal-binding</keyword>
<keyword id="KW-1185">Reference proteome</keyword>
<keyword id="KW-0964">Secreted</keyword>
<keyword id="KW-0732">Signal</keyword>
<keyword id="KW-0838">Vasoactive</keyword>
<keyword id="KW-0840">Vasodilator</keyword>
<dbReference type="EMBL" id="L39654">
    <property type="protein sequence ID" value="AAA74407.1"/>
    <property type="molecule type" value="mRNA"/>
</dbReference>
<dbReference type="PIR" id="A56385">
    <property type="entry name" value="A56385"/>
</dbReference>
<dbReference type="PDB" id="1NP1">
    <property type="method" value="X-ray"/>
    <property type="resolution" value="2.00 A"/>
    <property type="chains" value="A/B=24-207"/>
</dbReference>
<dbReference type="PDB" id="1U17">
    <property type="method" value="X-ray"/>
    <property type="resolution" value="1.70 A"/>
    <property type="chains" value="A/B=24-207"/>
</dbReference>
<dbReference type="PDB" id="1U18">
    <property type="method" value="X-ray"/>
    <property type="resolution" value="1.96 A"/>
    <property type="chains" value="A/B=24-207"/>
</dbReference>
<dbReference type="PDB" id="2NP1">
    <property type="method" value="X-ray"/>
    <property type="resolution" value="2.00 A"/>
    <property type="chains" value="A/B=24-207"/>
</dbReference>
<dbReference type="PDB" id="3NP1">
    <property type="method" value="X-ray"/>
    <property type="resolution" value="2.30 A"/>
    <property type="chains" value="A/B=24-207"/>
</dbReference>
<dbReference type="PDB" id="4NP1">
    <property type="method" value="X-ray"/>
    <property type="resolution" value="2.30 A"/>
    <property type="chains" value="A/B=24-207"/>
</dbReference>
<dbReference type="PDBsum" id="1NP1"/>
<dbReference type="PDBsum" id="1U17"/>
<dbReference type="PDBsum" id="1U18"/>
<dbReference type="PDBsum" id="2NP1"/>
<dbReference type="PDBsum" id="3NP1"/>
<dbReference type="PDBsum" id="4NP1"/>
<dbReference type="SMR" id="Q26239"/>
<dbReference type="VEuPathDB" id="VectorBase:RPRC000023"/>
<dbReference type="HOGENOM" id="CLU_117833_0_0_1"/>
<dbReference type="InParanoid" id="Q26239"/>
<dbReference type="EvolutionaryTrace" id="Q26239"/>
<dbReference type="Proteomes" id="UP000015103">
    <property type="component" value="Unassembled WGS sequence"/>
</dbReference>
<dbReference type="GO" id="GO:0005576">
    <property type="term" value="C:extracellular region"/>
    <property type="evidence" value="ECO:0007669"/>
    <property type="project" value="UniProtKB-SubCell"/>
</dbReference>
<dbReference type="GO" id="GO:0051381">
    <property type="term" value="F:histamine binding"/>
    <property type="evidence" value="ECO:0007669"/>
    <property type="project" value="InterPro"/>
</dbReference>
<dbReference type="GO" id="GO:0046872">
    <property type="term" value="F:metal ion binding"/>
    <property type="evidence" value="ECO:0007669"/>
    <property type="project" value="UniProtKB-KW"/>
</dbReference>
<dbReference type="GO" id="GO:0070026">
    <property type="term" value="F:nitric oxide binding"/>
    <property type="evidence" value="ECO:0007669"/>
    <property type="project" value="InterPro"/>
</dbReference>
<dbReference type="GO" id="GO:0042311">
    <property type="term" value="P:vasodilation"/>
    <property type="evidence" value="ECO:0007669"/>
    <property type="project" value="UniProtKB-KW"/>
</dbReference>
<dbReference type="CDD" id="cd19455">
    <property type="entry name" value="lipocalin_NP1"/>
    <property type="match status" value="1"/>
</dbReference>
<dbReference type="Gene3D" id="2.40.128.20">
    <property type="match status" value="1"/>
</dbReference>
<dbReference type="InterPro" id="IPR012674">
    <property type="entry name" value="Calycin"/>
</dbReference>
<dbReference type="InterPro" id="IPR023613">
    <property type="entry name" value="Nitrophorin"/>
</dbReference>
<dbReference type="InterPro" id="IPR002351">
    <property type="entry name" value="Nitrophorin_domain"/>
</dbReference>
<dbReference type="Pfam" id="PF02087">
    <property type="entry name" value="Nitrophorin"/>
    <property type="match status" value="1"/>
</dbReference>
<dbReference type="PRINTS" id="PR00788">
    <property type="entry name" value="NITROPHORIN"/>
</dbReference>
<dbReference type="SUPFAM" id="SSF50814">
    <property type="entry name" value="Lipocalins"/>
    <property type="match status" value="1"/>
</dbReference>
<comment type="function">
    <text evidence="1">Heme-based protein that deliver nitric oxide gas (NO) to the victim while feeding, resulting in vasodilation and inhibition of platelet aggregation. Reversibly binds nitric oxide (NO) (PubMed:7721773). Also binds tightly to histamine, which is released by the host to induce wound healing.</text>
</comment>
<comment type="subcellular location">
    <subcellularLocation>
        <location evidence="4">Secreted</location>
    </subcellularLocation>
</comment>
<comment type="tissue specificity">
    <text evidence="1">Salivary gland (at protein level).</text>
</comment>
<comment type="similarity">
    <text evidence="4">Belongs to the calycin superfamily. Nitrophorin family.</text>
</comment>
<accession>Q26239</accession>
<reference key="1">
    <citation type="journal article" date="1995" name="J. Biol. Chem.">
        <title>Purification, partial characterization, and cloning of nitric oxide-carrying heme proteins (nitrophorins) from salivary glands of the blood-sucking insect Rhodnius prolixus.</title>
        <authorList>
            <person name="Champagne D.E."/>
            <person name="Nussenzveig R.H."/>
            <person name="Ribeiro J.M.C."/>
        </authorList>
    </citation>
    <scope>NUCLEOTIDE SEQUENCE [MRNA]</scope>
    <scope>PARTIAL PROTEIN SEQUENCE</scope>
    <scope>FUNCTION</scope>
    <scope>TISSUE SPECIFICITY</scope>
    <source>
        <tissue>Salivary gland</tissue>
    </source>
</reference>
<reference evidence="5 6 7" key="2">
    <citation type="journal article" date="1998" name="Nat. Struct. Biol.">
        <title>Crystal structures of a nitric oxide transport protein from a blood-sucking insect.</title>
        <authorList>
            <person name="Weichsel A."/>
            <person name="Andersen J.F."/>
            <person name="Champagne D.E."/>
            <person name="Walker F.A."/>
            <person name="Montfort W.R."/>
        </authorList>
    </citation>
    <scope>X-RAY CRYSTALLOGRAPHY (2.0 ANGSTROMS)</scope>
    <scope>DISULFIDE BONDS</scope>
    <source>
        <tissue>Salivary gland</tissue>
    </source>
</reference>
<reference evidence="8" key="3">
    <citation type="submission" date="1998-06" db="PDB data bank">
        <authorList>
            <person name="Ding X.D."/>
            <person name="Weichsel A."/>
            <person name="Andersen J.F."/>
            <person name="Shokhireva T.K."/>
            <person name="Balfour C."/>
            <person name="Pierik A."/>
            <person name="Averill B.A."/>
            <person name="Montfort W.R."/>
            <person name="Walker F.A."/>
        </authorList>
    </citation>
    <scope>X-RAY CRYSTALLOGRAPHY (2.3 ANGSTROMS)</scope>
    <scope>DISULFIDE BONDS</scope>
</reference>
<sequence>MKSYTALLAVAILCLFAAVGVSGKCTKNALAQTGFNKDKYFNGDVWYVTDYLDLEPDDVPKRYCAALAAGTASGKLKEALYHYDPKTQDTFYDVSELQEESPGKYTANFKKVEKNGNVKVDVTSGNYYTFTVMYADDSSALIHTCLHKGNKDLGDLYAVLNRNKDTNAGDKVKGAVTAASLKFSDFISTKDNKCEYDNVSLKSLLTK</sequence>
<name>NP1_RHOPR</name>
<organism>
    <name type="scientific">Rhodnius prolixus</name>
    <name type="common">Triatomid bug</name>
    <dbReference type="NCBI Taxonomy" id="13249"/>
    <lineage>
        <taxon>Eukaryota</taxon>
        <taxon>Metazoa</taxon>
        <taxon>Ecdysozoa</taxon>
        <taxon>Arthropoda</taxon>
        <taxon>Hexapoda</taxon>
        <taxon>Insecta</taxon>
        <taxon>Pterygota</taxon>
        <taxon>Neoptera</taxon>
        <taxon>Paraneoptera</taxon>
        <taxon>Hemiptera</taxon>
        <taxon>Heteroptera</taxon>
        <taxon>Panheteroptera</taxon>
        <taxon>Cimicomorpha</taxon>
        <taxon>Reduviidae</taxon>
        <taxon>Triatominae</taxon>
        <taxon>Rhodnius</taxon>
    </lineage>
</organism>
<protein>
    <recommendedName>
        <fullName>Nitrophorin-1</fullName>
        <shortName>NP1</shortName>
    </recommendedName>
</protein>